<dbReference type="EC" id="1.4.3.21" evidence="3"/>
<dbReference type="EMBL" id="U03517">
    <property type="protein sequence ID" value="AAA18114.1"/>
    <property type="molecule type" value="Unassigned_DNA"/>
</dbReference>
<dbReference type="PIR" id="JC2139">
    <property type="entry name" value="JC2139"/>
</dbReference>
<dbReference type="PDB" id="1AV4">
    <property type="method" value="X-ray"/>
    <property type="resolution" value="2.20 A"/>
    <property type="chains" value="A=1-638"/>
</dbReference>
<dbReference type="PDB" id="1AVK">
    <property type="method" value="X-ray"/>
    <property type="resolution" value="2.20 A"/>
    <property type="chains" value="A=1-638"/>
</dbReference>
<dbReference type="PDB" id="1AVL">
    <property type="method" value="X-ray"/>
    <property type="resolution" value="2.80 A"/>
    <property type="chains" value="A=1-638"/>
</dbReference>
<dbReference type="PDB" id="1IQX">
    <property type="method" value="X-ray"/>
    <property type="resolution" value="2.00 A"/>
    <property type="chains" value="A/B=1-638"/>
</dbReference>
<dbReference type="PDB" id="1IQY">
    <property type="method" value="X-ray"/>
    <property type="resolution" value="1.80 A"/>
    <property type="chains" value="A/B=1-638"/>
</dbReference>
<dbReference type="PDB" id="1IU7">
    <property type="method" value="X-ray"/>
    <property type="resolution" value="1.80 A"/>
    <property type="chains" value="A/B=1-638"/>
</dbReference>
<dbReference type="PDB" id="1IVU">
    <property type="method" value="X-ray"/>
    <property type="resolution" value="1.90 A"/>
    <property type="chains" value="A/B=1-638"/>
</dbReference>
<dbReference type="PDB" id="1IVV">
    <property type="method" value="X-ray"/>
    <property type="resolution" value="2.10 A"/>
    <property type="chains" value="A/B=1-638"/>
</dbReference>
<dbReference type="PDB" id="1IVW">
    <property type="method" value="X-ray"/>
    <property type="resolution" value="1.80 A"/>
    <property type="chains" value="A/B=1-638"/>
</dbReference>
<dbReference type="PDB" id="1IVX">
    <property type="method" value="X-ray"/>
    <property type="resolution" value="2.20 A"/>
    <property type="chains" value="A/B=1-638"/>
</dbReference>
<dbReference type="PDB" id="1RJO">
    <property type="method" value="X-ray"/>
    <property type="resolution" value="1.67 A"/>
    <property type="chains" value="A=3-638"/>
</dbReference>
<dbReference type="PDB" id="1SIH">
    <property type="method" value="X-ray"/>
    <property type="resolution" value="1.73 A"/>
    <property type="chains" value="A=3-638"/>
</dbReference>
<dbReference type="PDB" id="1SII">
    <property type="method" value="X-ray"/>
    <property type="resolution" value="1.70 A"/>
    <property type="chains" value="A=3-638"/>
</dbReference>
<dbReference type="PDB" id="1UI7">
    <property type="method" value="X-ray"/>
    <property type="resolution" value="2.00 A"/>
    <property type="chains" value="A/B=1-638"/>
</dbReference>
<dbReference type="PDB" id="1UI8">
    <property type="method" value="X-ray"/>
    <property type="resolution" value="1.80 A"/>
    <property type="chains" value="A/B=1-638"/>
</dbReference>
<dbReference type="PDB" id="1W4N">
    <property type="method" value="X-ray"/>
    <property type="resolution" value="1.65 A"/>
    <property type="chains" value="A/B=3-638"/>
</dbReference>
<dbReference type="PDB" id="1W5Z">
    <property type="method" value="X-ray"/>
    <property type="resolution" value="1.86 A"/>
    <property type="chains" value="A=3-638"/>
</dbReference>
<dbReference type="PDB" id="1W6C">
    <property type="method" value="X-ray"/>
    <property type="resolution" value="2.20 A"/>
    <property type="chains" value="A=3-638"/>
</dbReference>
<dbReference type="PDB" id="1W6G">
    <property type="method" value="X-ray"/>
    <property type="resolution" value="1.55 A"/>
    <property type="chains" value="A=3-638"/>
</dbReference>
<dbReference type="PDB" id="1WMN">
    <property type="method" value="X-ray"/>
    <property type="resolution" value="1.80 A"/>
    <property type="chains" value="A/B=1-638"/>
</dbReference>
<dbReference type="PDB" id="1WMO">
    <property type="method" value="X-ray"/>
    <property type="resolution" value="1.80 A"/>
    <property type="chains" value="A/B=1-638"/>
</dbReference>
<dbReference type="PDB" id="1WMP">
    <property type="method" value="X-ray"/>
    <property type="resolution" value="2.00 A"/>
    <property type="chains" value="A/B=1-638"/>
</dbReference>
<dbReference type="PDB" id="2BT3">
    <property type="method" value="X-ray"/>
    <property type="resolution" value="1.73 A"/>
    <property type="chains" value="A=3-638"/>
</dbReference>
<dbReference type="PDB" id="2CFD">
    <property type="method" value="X-ray"/>
    <property type="resolution" value="1.60 A"/>
    <property type="chains" value="A/B=3-638"/>
</dbReference>
<dbReference type="PDB" id="2CFG">
    <property type="method" value="X-ray"/>
    <property type="resolution" value="1.55 A"/>
    <property type="chains" value="A/B=3-638"/>
</dbReference>
<dbReference type="PDB" id="2CFK">
    <property type="method" value="X-ray"/>
    <property type="resolution" value="1.80 A"/>
    <property type="chains" value="A=3-638"/>
</dbReference>
<dbReference type="PDB" id="2CFL">
    <property type="method" value="X-ray"/>
    <property type="resolution" value="1.80 A"/>
    <property type="chains" value="A=3-638"/>
</dbReference>
<dbReference type="PDB" id="2CFW">
    <property type="method" value="X-ray"/>
    <property type="resolution" value="1.74 A"/>
    <property type="chains" value="A=3-638"/>
</dbReference>
<dbReference type="PDB" id="2CG0">
    <property type="method" value="X-ray"/>
    <property type="resolution" value="1.80 A"/>
    <property type="chains" value="A=3-638"/>
</dbReference>
<dbReference type="PDB" id="2CG1">
    <property type="method" value="X-ray"/>
    <property type="resolution" value="1.67 A"/>
    <property type="chains" value="A=3-638"/>
</dbReference>
<dbReference type="PDB" id="2CWT">
    <property type="method" value="X-ray"/>
    <property type="resolution" value="1.82 A"/>
    <property type="chains" value="A/B=1-638"/>
</dbReference>
<dbReference type="PDB" id="2CWU">
    <property type="method" value="X-ray"/>
    <property type="resolution" value="1.85 A"/>
    <property type="chains" value="A/B=1-638"/>
</dbReference>
<dbReference type="PDB" id="2CWV">
    <property type="method" value="X-ray"/>
    <property type="resolution" value="1.85 A"/>
    <property type="chains" value="A/B=1-638"/>
</dbReference>
<dbReference type="PDB" id="2D1W">
    <property type="method" value="X-ray"/>
    <property type="resolution" value="1.74 A"/>
    <property type="chains" value="A/B=1-638"/>
</dbReference>
<dbReference type="PDB" id="2E2T">
    <property type="method" value="X-ray"/>
    <property type="resolution" value="2.05 A"/>
    <property type="chains" value="A=1-638"/>
</dbReference>
<dbReference type="PDB" id="2E2U">
    <property type="method" value="X-ray"/>
    <property type="resolution" value="1.68 A"/>
    <property type="chains" value="A/B=1-628"/>
</dbReference>
<dbReference type="PDB" id="2E2V">
    <property type="method" value="X-ray"/>
    <property type="resolution" value="1.80 A"/>
    <property type="chains" value="A/B=1-628"/>
</dbReference>
<dbReference type="PDB" id="2YX9">
    <property type="method" value="X-ray"/>
    <property type="resolution" value="1.68 A"/>
    <property type="chains" value="A/B=1-638"/>
</dbReference>
<dbReference type="PDB" id="2ZL8">
    <property type="method" value="X-ray"/>
    <property type="resolution" value="1.73 A"/>
    <property type="chains" value="A/B=1-638"/>
</dbReference>
<dbReference type="PDB" id="3AMO">
    <property type="method" value="X-ray"/>
    <property type="resolution" value="2.10 A"/>
    <property type="chains" value="A/B=1-638"/>
</dbReference>
<dbReference type="PDB" id="3KII">
    <property type="method" value="X-ray"/>
    <property type="resolution" value="1.90 A"/>
    <property type="chains" value="A/B=3-638"/>
</dbReference>
<dbReference type="PDB" id="3KN4">
    <property type="method" value="X-ray"/>
    <property type="resolution" value="2.05 A"/>
    <property type="chains" value="A=3-638"/>
</dbReference>
<dbReference type="PDB" id="3WA2">
    <property type="method" value="X-ray"/>
    <property type="resolution" value="1.08 A"/>
    <property type="chains" value="X=9-629"/>
</dbReference>
<dbReference type="PDB" id="3WA3">
    <property type="method" value="X-ray"/>
    <property type="resolution" value="1.55 A"/>
    <property type="chains" value="A/B=9-629"/>
</dbReference>
<dbReference type="PDB" id="3X3X">
    <property type="method" value="X-ray"/>
    <property type="resolution" value="1.57 A"/>
    <property type="chains" value="A/B=9-628"/>
</dbReference>
<dbReference type="PDB" id="3X3Y">
    <property type="method" value="X-ray"/>
    <property type="resolution" value="1.50 A"/>
    <property type="chains" value="A/B=9-628"/>
</dbReference>
<dbReference type="PDB" id="3X3Z">
    <property type="method" value="X-ray"/>
    <property type="resolution" value="1.51 A"/>
    <property type="chains" value="A/B=9-628"/>
</dbReference>
<dbReference type="PDB" id="3X40">
    <property type="method" value="X-ray"/>
    <property type="resolution" value="1.85 A"/>
    <property type="chains" value="A/B=9-628"/>
</dbReference>
<dbReference type="PDB" id="3X41">
    <property type="method" value="X-ray"/>
    <property type="resolution" value="1.87 A"/>
    <property type="chains" value="A/B=9-628"/>
</dbReference>
<dbReference type="PDB" id="3X42">
    <property type="method" value="X-ray"/>
    <property type="resolution" value="1.88 A"/>
    <property type="chains" value="A/B=9-629"/>
</dbReference>
<dbReference type="PDB" id="5ZOU">
    <property type="method" value="X-ray"/>
    <property type="resolution" value="1.68 A"/>
    <property type="chains" value="A/B=9-628"/>
</dbReference>
<dbReference type="PDB" id="5ZOW">
    <property type="method" value="X-ray"/>
    <property type="resolution" value="1.78 A"/>
    <property type="chains" value="A/B=9-628"/>
</dbReference>
<dbReference type="PDB" id="5ZOX">
    <property type="method" value="X-ray"/>
    <property type="resolution" value="1.69 A"/>
    <property type="chains" value="A/B=9-628"/>
</dbReference>
<dbReference type="PDB" id="5ZOY">
    <property type="method" value="X-ray"/>
    <property type="resolution" value="1.70 A"/>
    <property type="chains" value="A/B=9-628"/>
</dbReference>
<dbReference type="PDB" id="5ZOZ">
    <property type="method" value="X-ray"/>
    <property type="resolution" value="1.70 A"/>
    <property type="chains" value="A/B=9-628"/>
</dbReference>
<dbReference type="PDB" id="5ZP0">
    <property type="method" value="X-ray"/>
    <property type="resolution" value="1.74 A"/>
    <property type="chains" value="A/B=9-628"/>
</dbReference>
<dbReference type="PDB" id="5ZP1">
    <property type="method" value="X-ray"/>
    <property type="resolution" value="1.67 A"/>
    <property type="chains" value="A/B=9-628"/>
</dbReference>
<dbReference type="PDB" id="5ZP2">
    <property type="method" value="X-ray"/>
    <property type="resolution" value="1.75 A"/>
    <property type="chains" value="A/B=9-628"/>
</dbReference>
<dbReference type="PDB" id="5ZP3">
    <property type="method" value="X-ray"/>
    <property type="resolution" value="1.78 A"/>
    <property type="chains" value="A/B=9-628"/>
</dbReference>
<dbReference type="PDB" id="5ZP4">
    <property type="method" value="X-ray"/>
    <property type="resolution" value="1.80 A"/>
    <property type="chains" value="A/B=9-628"/>
</dbReference>
<dbReference type="PDB" id="5ZP5">
    <property type="method" value="X-ray"/>
    <property type="resolution" value="1.77 A"/>
    <property type="chains" value="A/B=9-628"/>
</dbReference>
<dbReference type="PDB" id="5ZP6">
    <property type="method" value="X-ray"/>
    <property type="resolution" value="1.69 A"/>
    <property type="chains" value="A/B=9-628"/>
</dbReference>
<dbReference type="PDB" id="5ZP7">
    <property type="method" value="X-ray"/>
    <property type="resolution" value="1.63 A"/>
    <property type="chains" value="A/B=9-628"/>
</dbReference>
<dbReference type="PDB" id="5ZP8">
    <property type="method" value="X-ray"/>
    <property type="resolution" value="1.66 A"/>
    <property type="chains" value="A/B=9-628"/>
</dbReference>
<dbReference type="PDB" id="5ZP9">
    <property type="method" value="X-ray"/>
    <property type="resolution" value="1.70 A"/>
    <property type="chains" value="A/B=9-628"/>
</dbReference>
<dbReference type="PDB" id="5ZPA">
    <property type="method" value="X-ray"/>
    <property type="resolution" value="1.69 A"/>
    <property type="chains" value="A/B=9-628"/>
</dbReference>
<dbReference type="PDB" id="5ZPB">
    <property type="method" value="X-ray"/>
    <property type="resolution" value="1.79 A"/>
    <property type="chains" value="A/B=9-628"/>
</dbReference>
<dbReference type="PDB" id="5ZPC">
    <property type="method" value="X-ray"/>
    <property type="resolution" value="1.74 A"/>
    <property type="chains" value="A/B=9-628"/>
</dbReference>
<dbReference type="PDB" id="5ZPD">
    <property type="method" value="X-ray"/>
    <property type="resolution" value="1.67 A"/>
    <property type="chains" value="A/B=9-628"/>
</dbReference>
<dbReference type="PDB" id="5ZPE">
    <property type="method" value="X-ray"/>
    <property type="resolution" value="1.69 A"/>
    <property type="chains" value="A/B=9-628"/>
</dbReference>
<dbReference type="PDB" id="5ZPF">
    <property type="method" value="X-ray"/>
    <property type="resolution" value="1.76 A"/>
    <property type="chains" value="A/B=9-628"/>
</dbReference>
<dbReference type="PDB" id="5ZPG">
    <property type="method" value="X-ray"/>
    <property type="resolution" value="1.65 A"/>
    <property type="chains" value="A/B=9-628"/>
</dbReference>
<dbReference type="PDB" id="5ZPH">
    <property type="method" value="X-ray"/>
    <property type="resolution" value="1.72 A"/>
    <property type="chains" value="A/B=9-628"/>
</dbReference>
<dbReference type="PDB" id="5ZPI">
    <property type="method" value="X-ray"/>
    <property type="resolution" value="1.75 A"/>
    <property type="chains" value="A/B=9-628"/>
</dbReference>
<dbReference type="PDB" id="5ZPJ">
    <property type="method" value="X-ray"/>
    <property type="resolution" value="1.65 A"/>
    <property type="chains" value="A/B=9-628"/>
</dbReference>
<dbReference type="PDB" id="5ZPK">
    <property type="method" value="X-ray"/>
    <property type="resolution" value="1.65 A"/>
    <property type="chains" value="A/B=9-628"/>
</dbReference>
<dbReference type="PDB" id="5ZPL">
    <property type="method" value="X-ray"/>
    <property type="resolution" value="1.60 A"/>
    <property type="chains" value="A/B=9-628"/>
</dbReference>
<dbReference type="PDB" id="5ZPM">
    <property type="method" value="X-ray"/>
    <property type="resolution" value="1.65 A"/>
    <property type="chains" value="A/B=9-628"/>
</dbReference>
<dbReference type="PDB" id="5ZPN">
    <property type="method" value="X-ray"/>
    <property type="resolution" value="1.60 A"/>
    <property type="chains" value="A/B=9-628"/>
</dbReference>
<dbReference type="PDB" id="5ZPO">
    <property type="method" value="X-ray"/>
    <property type="resolution" value="1.73 A"/>
    <property type="chains" value="A/B=9-628"/>
</dbReference>
<dbReference type="PDB" id="5ZPP">
    <property type="method" value="X-ray"/>
    <property type="resolution" value="1.81 A"/>
    <property type="chains" value="A/B=9-628"/>
</dbReference>
<dbReference type="PDB" id="5ZPQ">
    <property type="method" value="X-ray"/>
    <property type="resolution" value="1.85 A"/>
    <property type="chains" value="A/B=9-628"/>
</dbReference>
<dbReference type="PDB" id="5ZPR">
    <property type="method" value="X-ray"/>
    <property type="resolution" value="1.92 A"/>
    <property type="chains" value="A/B=9-628"/>
</dbReference>
<dbReference type="PDB" id="5ZPS">
    <property type="method" value="X-ray"/>
    <property type="resolution" value="1.75 A"/>
    <property type="chains" value="A/B=9-628"/>
</dbReference>
<dbReference type="PDB" id="5ZPT">
    <property type="method" value="X-ray"/>
    <property type="resolution" value="1.90 A"/>
    <property type="chains" value="A/B=9-628"/>
</dbReference>
<dbReference type="PDB" id="6L9C">
    <property type="method" value="Other"/>
    <property type="resolution" value="1.14 A"/>
    <property type="chains" value="X=9-629"/>
</dbReference>
<dbReference type="PDB" id="7F8K">
    <property type="method" value="X-ray"/>
    <property type="resolution" value="2.20 A"/>
    <property type="chains" value="A=1-638"/>
</dbReference>
<dbReference type="PDB" id="7WIR">
    <property type="method" value="X-ray"/>
    <property type="resolution" value="1.50 A"/>
    <property type="chains" value="A/B=9-628"/>
</dbReference>
<dbReference type="PDB" id="7WIS">
    <property type="method" value="X-ray"/>
    <property type="resolution" value="1.90 A"/>
    <property type="chains" value="A/B=9-628"/>
</dbReference>
<dbReference type="PDB" id="7WNO">
    <property type="method" value="Neutron"/>
    <property type="resolution" value="1.72 A"/>
    <property type="chains" value="X=9-629"/>
</dbReference>
<dbReference type="PDB" id="7WNP">
    <property type="method" value="Other"/>
    <property type="resolution" value="1.72 A"/>
    <property type="chains" value="X=9-629"/>
</dbReference>
<dbReference type="PDB" id="7YNH">
    <property type="method" value="X-ray"/>
    <property type="resolution" value="1.94 A"/>
    <property type="chains" value="A/B=9-628"/>
</dbReference>
<dbReference type="PDB" id="8J6G">
    <property type="method" value="Other"/>
    <property type="resolution" value="1.09 A"/>
    <property type="chains" value="A=8-628"/>
</dbReference>
<dbReference type="PDBsum" id="1AV4"/>
<dbReference type="PDBsum" id="1AVK"/>
<dbReference type="PDBsum" id="1AVL"/>
<dbReference type="PDBsum" id="1IQX"/>
<dbReference type="PDBsum" id="1IQY"/>
<dbReference type="PDBsum" id="1IU7"/>
<dbReference type="PDBsum" id="1IVU"/>
<dbReference type="PDBsum" id="1IVV"/>
<dbReference type="PDBsum" id="1IVW"/>
<dbReference type="PDBsum" id="1IVX"/>
<dbReference type="PDBsum" id="1RJO"/>
<dbReference type="PDBsum" id="1SIH"/>
<dbReference type="PDBsum" id="1SII"/>
<dbReference type="PDBsum" id="1UI7"/>
<dbReference type="PDBsum" id="1UI8"/>
<dbReference type="PDBsum" id="1W4N"/>
<dbReference type="PDBsum" id="1W5Z"/>
<dbReference type="PDBsum" id="1W6C"/>
<dbReference type="PDBsum" id="1W6G"/>
<dbReference type="PDBsum" id="1WMN"/>
<dbReference type="PDBsum" id="1WMO"/>
<dbReference type="PDBsum" id="1WMP"/>
<dbReference type="PDBsum" id="2BT3"/>
<dbReference type="PDBsum" id="2CFD"/>
<dbReference type="PDBsum" id="2CFG"/>
<dbReference type="PDBsum" id="2CFK"/>
<dbReference type="PDBsum" id="2CFL"/>
<dbReference type="PDBsum" id="2CFW"/>
<dbReference type="PDBsum" id="2CG0"/>
<dbReference type="PDBsum" id="2CG1"/>
<dbReference type="PDBsum" id="2CWT"/>
<dbReference type="PDBsum" id="2CWU"/>
<dbReference type="PDBsum" id="2CWV"/>
<dbReference type="PDBsum" id="2D1W"/>
<dbReference type="PDBsum" id="2E2T"/>
<dbReference type="PDBsum" id="2E2U"/>
<dbReference type="PDBsum" id="2E2V"/>
<dbReference type="PDBsum" id="2YX9"/>
<dbReference type="PDBsum" id="2ZL8"/>
<dbReference type="PDBsum" id="3AMO"/>
<dbReference type="PDBsum" id="3KII"/>
<dbReference type="PDBsum" id="3KN4"/>
<dbReference type="PDBsum" id="3WA2"/>
<dbReference type="PDBsum" id="3WA3"/>
<dbReference type="PDBsum" id="3X3X"/>
<dbReference type="PDBsum" id="3X3Y"/>
<dbReference type="PDBsum" id="3X3Z"/>
<dbReference type="PDBsum" id="3X40"/>
<dbReference type="PDBsum" id="3X41"/>
<dbReference type="PDBsum" id="3X42"/>
<dbReference type="PDBsum" id="5ZOU"/>
<dbReference type="PDBsum" id="5ZOW"/>
<dbReference type="PDBsum" id="5ZOX"/>
<dbReference type="PDBsum" id="5ZOY"/>
<dbReference type="PDBsum" id="5ZOZ"/>
<dbReference type="PDBsum" id="5ZP0"/>
<dbReference type="PDBsum" id="5ZP1"/>
<dbReference type="PDBsum" id="5ZP2"/>
<dbReference type="PDBsum" id="5ZP3"/>
<dbReference type="PDBsum" id="5ZP4"/>
<dbReference type="PDBsum" id="5ZP5"/>
<dbReference type="PDBsum" id="5ZP6"/>
<dbReference type="PDBsum" id="5ZP7"/>
<dbReference type="PDBsum" id="5ZP8"/>
<dbReference type="PDBsum" id="5ZP9"/>
<dbReference type="PDBsum" id="5ZPA"/>
<dbReference type="PDBsum" id="5ZPB"/>
<dbReference type="PDBsum" id="5ZPC"/>
<dbReference type="PDBsum" id="5ZPD"/>
<dbReference type="PDBsum" id="5ZPE"/>
<dbReference type="PDBsum" id="5ZPF"/>
<dbReference type="PDBsum" id="5ZPG"/>
<dbReference type="PDBsum" id="5ZPH"/>
<dbReference type="PDBsum" id="5ZPI"/>
<dbReference type="PDBsum" id="5ZPJ"/>
<dbReference type="PDBsum" id="5ZPK"/>
<dbReference type="PDBsum" id="5ZPL"/>
<dbReference type="PDBsum" id="5ZPM"/>
<dbReference type="PDBsum" id="5ZPN"/>
<dbReference type="PDBsum" id="5ZPO"/>
<dbReference type="PDBsum" id="5ZPP"/>
<dbReference type="PDBsum" id="5ZPQ"/>
<dbReference type="PDBsum" id="5ZPR"/>
<dbReference type="PDBsum" id="5ZPS"/>
<dbReference type="PDBsum" id="5ZPT"/>
<dbReference type="PDBsum" id="6L9C"/>
<dbReference type="PDBsum" id="7F8K"/>
<dbReference type="PDBsum" id="7WIR"/>
<dbReference type="PDBsum" id="7WIS"/>
<dbReference type="PDBsum" id="7WNO"/>
<dbReference type="PDBsum" id="7WNP"/>
<dbReference type="PDBsum" id="7YNH"/>
<dbReference type="PDBsum" id="8J6G"/>
<dbReference type="SMR" id="P46881"/>
<dbReference type="DrugBank" id="DB02511">
    <property type="generic name" value="2-Hydroxy-5-({1-[(2-Naphthyloxy)Methyl]-3-Oxoprop-1-Enyl}Amino)Tyrosine"/>
</dbReference>
<dbReference type="DrugBank" id="DB02537">
    <property type="generic name" value="2-Hydroxy-5-({1-[(4-Methylphenoxy)Methyl]-3-Oxoprop-1-Enyl}Amino)-L-Tyrosine"/>
</dbReference>
<dbReference type="DrugBank" id="DB06988">
    <property type="generic name" value="2-HYDROXY-5-{[(1E)-2-PHENYLETHYLIDENE]AMINO}-L-TYROSINE"/>
</dbReference>
<dbReference type="DrugBank" id="DB04334">
    <property type="generic name" value="6-hydroxydopa quinone"/>
</dbReference>
<dbReference type="KEGG" id="ag:AAA18114"/>
<dbReference type="BRENDA" id="1.4.3.21">
    <property type="organism ID" value="444"/>
</dbReference>
<dbReference type="EvolutionaryTrace" id="P46881"/>
<dbReference type="GO" id="GO:0005507">
    <property type="term" value="F:copper ion binding"/>
    <property type="evidence" value="ECO:0007669"/>
    <property type="project" value="InterPro"/>
</dbReference>
<dbReference type="GO" id="GO:0008131">
    <property type="term" value="F:primary methylamine oxidase activity"/>
    <property type="evidence" value="ECO:0007669"/>
    <property type="project" value="UniProtKB-EC"/>
</dbReference>
<dbReference type="GO" id="GO:0048038">
    <property type="term" value="F:quinone binding"/>
    <property type="evidence" value="ECO:0007669"/>
    <property type="project" value="InterPro"/>
</dbReference>
<dbReference type="GO" id="GO:0009308">
    <property type="term" value="P:amine metabolic process"/>
    <property type="evidence" value="ECO:0007669"/>
    <property type="project" value="InterPro"/>
</dbReference>
<dbReference type="FunFam" id="2.70.98.20:FF:000001">
    <property type="entry name" value="Amine oxidase"/>
    <property type="match status" value="1"/>
</dbReference>
<dbReference type="Gene3D" id="3.10.450.40">
    <property type="match status" value="2"/>
</dbReference>
<dbReference type="Gene3D" id="2.70.98.20">
    <property type="entry name" value="Copper amine oxidase, catalytic domain"/>
    <property type="match status" value="1"/>
</dbReference>
<dbReference type="InterPro" id="IPR054157">
    <property type="entry name" value="AGAO-like_N2"/>
</dbReference>
<dbReference type="InterPro" id="IPR049947">
    <property type="entry name" value="Cu_Am_Ox_Cu-bd"/>
</dbReference>
<dbReference type="InterPro" id="IPR049948">
    <property type="entry name" value="Cu_Am_ox_TPQ-bd"/>
</dbReference>
<dbReference type="InterPro" id="IPR000269">
    <property type="entry name" value="Cu_amine_oxidase"/>
</dbReference>
<dbReference type="InterPro" id="IPR015798">
    <property type="entry name" value="Cu_amine_oxidase_C"/>
</dbReference>
<dbReference type="InterPro" id="IPR036460">
    <property type="entry name" value="Cu_amine_oxidase_C_sf"/>
</dbReference>
<dbReference type="InterPro" id="IPR016182">
    <property type="entry name" value="Cu_amine_oxidase_N-reg"/>
</dbReference>
<dbReference type="NCBIfam" id="NF008559">
    <property type="entry name" value="PRK11504.1"/>
    <property type="match status" value="1"/>
</dbReference>
<dbReference type="PANTHER" id="PTHR10638">
    <property type="entry name" value="COPPER AMINE OXIDASE"/>
    <property type="match status" value="1"/>
</dbReference>
<dbReference type="PANTHER" id="PTHR10638:SF86">
    <property type="entry name" value="COPPER AMINE OXIDASE 1-RELATED"/>
    <property type="match status" value="1"/>
</dbReference>
<dbReference type="Pfam" id="PF21994">
    <property type="entry name" value="AGAO-like_N2"/>
    <property type="match status" value="1"/>
</dbReference>
<dbReference type="Pfam" id="PF01179">
    <property type="entry name" value="Cu_amine_oxid"/>
    <property type="match status" value="1"/>
</dbReference>
<dbReference type="SUPFAM" id="SSF49998">
    <property type="entry name" value="Amine oxidase catalytic domain"/>
    <property type="match status" value="1"/>
</dbReference>
<dbReference type="SUPFAM" id="SSF54416">
    <property type="entry name" value="Amine oxidase N-terminal region"/>
    <property type="match status" value="2"/>
</dbReference>
<dbReference type="PROSITE" id="PS01164">
    <property type="entry name" value="COPPER_AMINE_OXID_1"/>
    <property type="match status" value="1"/>
</dbReference>
<dbReference type="PROSITE" id="PS01165">
    <property type="entry name" value="COPPER_AMINE_OXID_2"/>
    <property type="match status" value="1"/>
</dbReference>
<evidence type="ECO:0000250" key="1">
    <source>
        <dbReference type="UniProtKB" id="P12807"/>
    </source>
</evidence>
<evidence type="ECO:0000250" key="2">
    <source>
        <dbReference type="UniProtKB" id="P46883"/>
    </source>
</evidence>
<evidence type="ECO:0000269" key="3">
    <source>
    </source>
</evidence>
<evidence type="ECO:0000269" key="4">
    <source>
    </source>
</evidence>
<evidence type="ECO:0000303" key="5">
    <source>
    </source>
</evidence>
<evidence type="ECO:0000305" key="6"/>
<evidence type="ECO:0007744" key="7">
    <source>
        <dbReference type="PDB" id="1AV4"/>
    </source>
</evidence>
<evidence type="ECO:0007744" key="8">
    <source>
        <dbReference type="PDB" id="1AVK"/>
    </source>
</evidence>
<evidence type="ECO:0007744" key="9">
    <source>
        <dbReference type="PDB" id="1AVL"/>
    </source>
</evidence>
<evidence type="ECO:0007744" key="10">
    <source>
        <dbReference type="PDB" id="1IQX"/>
    </source>
</evidence>
<evidence type="ECO:0007744" key="11">
    <source>
        <dbReference type="PDB" id="1IQY"/>
    </source>
</evidence>
<evidence type="ECO:0007744" key="12">
    <source>
        <dbReference type="PDB" id="1IU7"/>
    </source>
</evidence>
<evidence type="ECO:0007744" key="13">
    <source>
        <dbReference type="PDB" id="1IVU"/>
    </source>
</evidence>
<evidence type="ECO:0007744" key="14">
    <source>
        <dbReference type="PDB" id="1IVV"/>
    </source>
</evidence>
<evidence type="ECO:0007744" key="15">
    <source>
        <dbReference type="PDB" id="1IVW"/>
    </source>
</evidence>
<evidence type="ECO:0007744" key="16">
    <source>
        <dbReference type="PDB" id="1IVX"/>
    </source>
</evidence>
<evidence type="ECO:0007744" key="17">
    <source>
        <dbReference type="PDB" id="1RJO"/>
    </source>
</evidence>
<evidence type="ECO:0007744" key="18">
    <source>
        <dbReference type="PDB" id="1SIH"/>
    </source>
</evidence>
<evidence type="ECO:0007744" key="19">
    <source>
        <dbReference type="PDB" id="1SII"/>
    </source>
</evidence>
<evidence type="ECO:0007744" key="20">
    <source>
        <dbReference type="PDB" id="1UI8"/>
    </source>
</evidence>
<evidence type="ECO:0007744" key="21">
    <source>
        <dbReference type="PDB" id="1W4N"/>
    </source>
</evidence>
<evidence type="ECO:0007744" key="22">
    <source>
        <dbReference type="PDB" id="1W5Z"/>
    </source>
</evidence>
<evidence type="ECO:0007744" key="23">
    <source>
        <dbReference type="PDB" id="1W6C"/>
    </source>
</evidence>
<evidence type="ECO:0007744" key="24">
    <source>
        <dbReference type="PDB" id="1W6G"/>
    </source>
</evidence>
<evidence type="ECO:0007744" key="25">
    <source>
        <dbReference type="PDB" id="1WMN"/>
    </source>
</evidence>
<evidence type="ECO:0007744" key="26">
    <source>
        <dbReference type="PDB" id="1WMO"/>
    </source>
</evidence>
<evidence type="ECO:0007744" key="27">
    <source>
        <dbReference type="PDB" id="2BT3"/>
    </source>
</evidence>
<evidence type="ECO:0007744" key="28">
    <source>
        <dbReference type="PDB" id="2CFD"/>
    </source>
</evidence>
<evidence type="ECO:0007744" key="29">
    <source>
        <dbReference type="PDB" id="2CFG"/>
    </source>
</evidence>
<evidence type="ECO:0007744" key="30">
    <source>
        <dbReference type="PDB" id="2CFK"/>
    </source>
</evidence>
<evidence type="ECO:0007744" key="31">
    <source>
        <dbReference type="PDB" id="2CFL"/>
    </source>
</evidence>
<evidence type="ECO:0007744" key="32">
    <source>
        <dbReference type="PDB" id="2CFW"/>
    </source>
</evidence>
<evidence type="ECO:0007744" key="33">
    <source>
        <dbReference type="PDB" id="2CG0"/>
    </source>
</evidence>
<evidence type="ECO:0007744" key="34">
    <source>
        <dbReference type="PDB" id="2CG1"/>
    </source>
</evidence>
<evidence type="ECO:0007744" key="35">
    <source>
        <dbReference type="PDB" id="2CWT"/>
    </source>
</evidence>
<evidence type="ECO:0007744" key="36">
    <source>
        <dbReference type="PDB" id="2CWU"/>
    </source>
</evidence>
<evidence type="ECO:0007744" key="37">
    <source>
        <dbReference type="PDB" id="2CWV"/>
    </source>
</evidence>
<evidence type="ECO:0007744" key="38">
    <source>
        <dbReference type="PDB" id="2D1W"/>
    </source>
</evidence>
<evidence type="ECO:0007744" key="39">
    <source>
        <dbReference type="PDB" id="2E2T"/>
    </source>
</evidence>
<evidence type="ECO:0007744" key="40">
    <source>
        <dbReference type="PDB" id="2E2U"/>
    </source>
</evidence>
<evidence type="ECO:0007744" key="41">
    <source>
        <dbReference type="PDB" id="2E2V"/>
    </source>
</evidence>
<evidence type="ECO:0007744" key="42">
    <source>
        <dbReference type="PDB" id="2YX9"/>
    </source>
</evidence>
<evidence type="ECO:0007744" key="43">
    <source>
        <dbReference type="PDB" id="2ZL8"/>
    </source>
</evidence>
<evidence type="ECO:0007744" key="44">
    <source>
        <dbReference type="PDB" id="3AMO"/>
    </source>
</evidence>
<evidence type="ECO:0007744" key="45">
    <source>
        <dbReference type="PDB" id="3KII"/>
    </source>
</evidence>
<evidence type="ECO:0007744" key="46">
    <source>
        <dbReference type="PDB" id="3KN4"/>
    </source>
</evidence>
<evidence type="ECO:0007744" key="47">
    <source>
        <dbReference type="PDB" id="3WA2"/>
    </source>
</evidence>
<evidence type="ECO:0007744" key="48">
    <source>
        <dbReference type="PDB" id="3WA3"/>
    </source>
</evidence>
<evidence type="ECO:0007829" key="49">
    <source>
        <dbReference type="PDB" id="1AV4"/>
    </source>
</evidence>
<evidence type="ECO:0007829" key="50">
    <source>
        <dbReference type="PDB" id="1WMO"/>
    </source>
</evidence>
<evidence type="ECO:0007829" key="51">
    <source>
        <dbReference type="PDB" id="3KN4"/>
    </source>
</evidence>
<evidence type="ECO:0007829" key="52">
    <source>
        <dbReference type="PDB" id="3WA2"/>
    </source>
</evidence>
<evidence type="ECO:0007829" key="53">
    <source>
        <dbReference type="PDB" id="3WA3"/>
    </source>
</evidence>
<evidence type="ECO:0007829" key="54">
    <source>
        <dbReference type="PDB" id="3X3Y"/>
    </source>
</evidence>
<evidence type="ECO:0007829" key="55">
    <source>
        <dbReference type="PDB" id="5ZOY"/>
    </source>
</evidence>
<proteinExistence type="evidence at protein level"/>
<organism>
    <name type="scientific">Arthrobacter globiformis</name>
    <dbReference type="NCBI Taxonomy" id="1665"/>
    <lineage>
        <taxon>Bacteria</taxon>
        <taxon>Bacillati</taxon>
        <taxon>Actinomycetota</taxon>
        <taxon>Actinomycetes</taxon>
        <taxon>Micrococcales</taxon>
        <taxon>Micrococcaceae</taxon>
        <taxon>Arthrobacter</taxon>
    </lineage>
</organism>
<comment type="function">
    <text evidence="3">Catalyzes the oxidative deamination of phenylethylamine to phenylacetaldehyde with the concomitant production of hydrogen peroxide and ammonia.</text>
</comment>
<comment type="catalytic activity">
    <reaction evidence="3">
        <text>a primary methyl amine + O2 + H2O = an aldehyde + H2O2 + NH4(+)</text>
        <dbReference type="Rhea" id="RHEA:16153"/>
        <dbReference type="ChEBI" id="CHEBI:15377"/>
        <dbReference type="ChEBI" id="CHEBI:15379"/>
        <dbReference type="ChEBI" id="CHEBI:16240"/>
        <dbReference type="ChEBI" id="CHEBI:17478"/>
        <dbReference type="ChEBI" id="CHEBI:28938"/>
        <dbReference type="ChEBI" id="CHEBI:228804"/>
        <dbReference type="EC" id="1.4.3.21"/>
    </reaction>
</comment>
<comment type="catalytic activity">
    <reaction evidence="3">
        <text>2-phenylethylamine + O2 + H2O = 2-phenylacetaldehyde + H2O2 + NH4(+)</text>
        <dbReference type="Rhea" id="RHEA:25265"/>
        <dbReference type="ChEBI" id="CHEBI:15377"/>
        <dbReference type="ChEBI" id="CHEBI:15379"/>
        <dbReference type="ChEBI" id="CHEBI:16240"/>
        <dbReference type="ChEBI" id="CHEBI:16424"/>
        <dbReference type="ChEBI" id="CHEBI:28938"/>
        <dbReference type="ChEBI" id="CHEBI:225237"/>
        <dbReference type="EC" id="1.4.3.21"/>
    </reaction>
</comment>
<comment type="cofactor">
    <cofactor evidence="3 4">
        <name>Cu cation</name>
        <dbReference type="ChEBI" id="CHEBI:23378"/>
    </cofactor>
    <text evidence="4">Binds 1 copper ion per subunit.</text>
</comment>
<comment type="cofactor">
    <cofactor evidence="4">
        <name>L-topaquinone</name>
        <dbReference type="ChEBI" id="CHEBI:79027"/>
    </cofactor>
    <text evidence="4">Contains 1 topaquinone per subunit.</text>
</comment>
<comment type="subunit">
    <text evidence="4">Homodimer.</text>
</comment>
<comment type="induction">
    <text>By phenethylamine.</text>
</comment>
<comment type="PTM">
    <text evidence="4">Topaquinone (TPQ) is generated by copper-dependent autoxidation of a specific tyrosyl residue.</text>
</comment>
<comment type="similarity">
    <text evidence="6">Belongs to the copper/topaquinone oxidase family.</text>
</comment>
<keyword id="KW-0002">3D-structure</keyword>
<keyword id="KW-0186">Copper</keyword>
<keyword id="KW-0903">Direct protein sequencing</keyword>
<keyword id="KW-1015">Disulfide bond</keyword>
<keyword id="KW-0479">Metal-binding</keyword>
<keyword id="KW-0560">Oxidoreductase</keyword>
<keyword id="KW-0801">TPQ</keyword>
<protein>
    <recommendedName>
        <fullName evidence="5">Phenylethylamine oxidase</fullName>
        <ecNumber evidence="3">1.4.3.21</ecNumber>
    </recommendedName>
    <alternativeName>
        <fullName>Primary amine oxidase</fullName>
    </alternativeName>
</protein>
<sequence>MTPSTIQTASPFRLASAGEISEVQGILRTAGLLGPEKRIAYLGVLDPARGAGSEAEDRRFRVFIHDVSGARPQEVTVSVTNGTVISAVELDTAATGELPVLEEEFEVVEQLLATDERWLKALAARNLDVSKVRVAPLSAGVFEYAEERGRRILRGLAFVQDFPEDSAWAHPVDGLVAYVDVVSKEVTRVIDTGVFPVPAEHGNYTDPELTGPLRTTQKPISITQPEGPSFTVTGGNHIEWEKWSLDVGFDVREGVVLHNIAFRDGDRLRPIINRASIAEMVVPYGDPSPIRSWQNYFDTGEYLVGQYANSLELGCDCLGDITYLSPVISDAFGNPREIRNGICMHEEDWGILAKHSDLWSGINYTRRNRRMVISFFTTIGNYDYGFYWYLYLDGTIEFEAKATGVVFTSAFPEGGSDNISQLAPGLGAPFHQHIFSARLDMAIDGFTNRVEEEDVVRQTMGPGNERGNAFSRKRTVLTRESEAVREADARTGRTWIISNPESKNRLNEPVGYKLHAHNQPTLLADPGSSIARRAAFATKDLWVTRYADDERYPTGDFVNQHSGGAGLPSYIAQDRDIDGQDIVVWHTFGLTHFPRVEDWPIMPVDTVGFKLRPEGFFDRSPVLDVPANPSQSGSHCHG</sequence>
<name>PAOX_ARTGO</name>
<reference key="1">
    <citation type="journal article" date="1994" name="Biochem. Biophys. Res. Commun.">
        <title>Cloning and sequencing of phenylethylamine oxidase from Arthrobacter globiformis and implication of Tyr-382 as the precursor to its covalently bound quinone cofactor.</title>
        <authorList>
            <person name="Tanizawa K."/>
            <person name="Matsuzaki R."/>
            <person name="Shimizu E."/>
            <person name="Yorifuji T."/>
            <person name="Fukui T."/>
        </authorList>
    </citation>
    <scope>NUCLEOTIDE SEQUENCE [GENOMIC DNA]</scope>
    <scope>PARTIAL PROTEIN SEQUENCE</scope>
    <scope>FUNCTION</scope>
    <scope>CATALYTIC ACTIVITY</scope>
    <scope>COFACTOR</scope>
    <scope>MUTAGENESIS OF TYR-382</scope>
    <source>
        <strain>ATCC 8010 / DSM 20124 / BCRC 10598 / JCM 1332 / KCTC 9101 / NBRC 12137 / NCIMB 8907 / NRRL B-2979 / 168</strain>
    </source>
</reference>
<reference evidence="7 8 9" key="2">
    <citation type="journal article" date="1997" name="Biochemistry">
        <title>Crystal structures of the copper-containing amine oxidase from Arthrobacter globiformis in the holo and apo forms: implications for the biogenesis of topaquinone.</title>
        <authorList>
            <person name="Wilce M.C."/>
            <person name="Dooley D.M."/>
            <person name="Freeman H.C."/>
            <person name="Guss J.M."/>
            <person name="Matsunami H."/>
            <person name="McIntire W.S."/>
            <person name="Ruggiero C.E."/>
            <person name="Tanizawa K."/>
            <person name="Yamaguchi H."/>
        </authorList>
    </citation>
    <scope>X-RAY CRYSTALLOGRAPHY (2.20 ANGSTROMS) IN COMPLEX WITH COPPER AND SUBSTRATE</scope>
    <scope>TOPAQUINONE AT TYR-382</scope>
    <scope>SUBUNIT</scope>
    <scope>DISULFIDE BOND</scope>
</reference>
<feature type="propeptide" id="PRO_0000035681">
    <location>
        <begin position="1"/>
        <end position="2"/>
    </location>
</feature>
<feature type="chain" id="PRO_0000035682" description="Phenylethylamine oxidase">
    <location>
        <begin position="3"/>
        <end position="638"/>
    </location>
</feature>
<feature type="active site" description="Proton acceptor" evidence="1">
    <location>
        <position position="298"/>
    </location>
</feature>
<feature type="active site" description="Schiff-base intermediate with substrate; via topaquinone" evidence="1">
    <location>
        <position position="382"/>
    </location>
</feature>
<feature type="binding site" evidence="1">
    <location>
        <begin position="296"/>
        <end position="307"/>
    </location>
    <ligand>
        <name>substrate</name>
    </ligand>
</feature>
<feature type="binding site" evidence="2">
    <location>
        <begin position="379"/>
        <end position="384"/>
    </location>
    <ligand>
        <name>substrate</name>
    </ligand>
</feature>
<feature type="binding site" evidence="4 7 9 12 13 14 15 16 17 18 19 20 21 22 23 24 27 28 29 30 31 32 33 34 35 36 37 38 39 40 41 42 43 44 45 46 47 48">
    <location>
        <position position="431"/>
    </location>
    <ligand>
        <name>Cu cation</name>
        <dbReference type="ChEBI" id="CHEBI:23378"/>
    </ligand>
</feature>
<feature type="binding site" evidence="4 7 9 12 13 14 15 16 17 18 19 20 21 22 23 24 27 28 29 30 31 32 33 34 35 36 37 38 39 40 41 42 43 44 45 46 47 48">
    <location>
        <position position="433"/>
    </location>
    <ligand>
        <name>Cu cation</name>
        <dbReference type="ChEBI" id="CHEBI:23378"/>
    </ligand>
</feature>
<feature type="binding site" evidence="4 7 9 12 13 14 15 16 17 18 19 20 21 22 23 24 27 28 29 30 31 32 33 34 35 36 37 38 39 40 41 42 43 44 45 46 47 48">
    <location>
        <position position="592"/>
    </location>
    <ligand>
        <name>Cu cation</name>
        <dbReference type="ChEBI" id="CHEBI:23378"/>
    </ligand>
</feature>
<feature type="modified residue" description="2',4',5'-topaquinone" evidence="4">
    <location>
        <position position="382"/>
    </location>
</feature>
<feature type="disulfide bond" evidence="4 7 9 10 11 12 15 16 17 20 25 26 35">
    <location>
        <begin position="317"/>
        <end position="343"/>
    </location>
</feature>
<feature type="mutagenesis site" description="Loss of activity." evidence="3">
    <original>Y</original>
    <variation>F</variation>
    <location>
        <position position="382"/>
    </location>
</feature>
<feature type="helix" evidence="52">
    <location>
        <begin position="17"/>
        <end position="29"/>
    </location>
</feature>
<feature type="strand" evidence="50">
    <location>
        <begin position="32"/>
        <end position="34"/>
    </location>
</feature>
<feature type="strand" evidence="52">
    <location>
        <begin position="37"/>
        <end position="44"/>
    </location>
</feature>
<feature type="strand" evidence="52">
    <location>
        <begin position="52"/>
        <end position="55"/>
    </location>
</feature>
<feature type="strand" evidence="52">
    <location>
        <begin position="59"/>
        <end position="66"/>
    </location>
</feature>
<feature type="strand" evidence="52">
    <location>
        <begin position="73"/>
        <end position="78"/>
    </location>
</feature>
<feature type="turn" evidence="52">
    <location>
        <begin position="79"/>
        <end position="82"/>
    </location>
</feature>
<feature type="strand" evidence="52">
    <location>
        <begin position="83"/>
        <end position="89"/>
    </location>
</feature>
<feature type="helix" evidence="52">
    <location>
        <begin position="92"/>
        <end position="95"/>
    </location>
</feature>
<feature type="helix" evidence="52">
    <location>
        <begin position="102"/>
        <end position="104"/>
    </location>
</feature>
<feature type="helix" evidence="52">
    <location>
        <begin position="107"/>
        <end position="112"/>
    </location>
</feature>
<feature type="helix" evidence="52">
    <location>
        <begin position="116"/>
        <end position="124"/>
    </location>
</feature>
<feature type="helix" evidence="52">
    <location>
        <begin position="129"/>
        <end position="131"/>
    </location>
</feature>
<feature type="strand" evidence="54">
    <location>
        <begin position="132"/>
        <end position="138"/>
    </location>
</feature>
<feature type="strand" evidence="51">
    <location>
        <begin position="141"/>
        <end position="143"/>
    </location>
</feature>
<feature type="helix" evidence="52">
    <location>
        <begin position="145"/>
        <end position="147"/>
    </location>
</feature>
<feature type="strand" evidence="52">
    <location>
        <begin position="152"/>
        <end position="155"/>
    </location>
</feature>
<feature type="strand" evidence="53">
    <location>
        <begin position="157"/>
        <end position="159"/>
    </location>
</feature>
<feature type="helix" evidence="52">
    <location>
        <begin position="167"/>
        <end position="169"/>
    </location>
</feature>
<feature type="strand" evidence="52">
    <location>
        <begin position="175"/>
        <end position="180"/>
    </location>
</feature>
<feature type="turn" evidence="52">
    <location>
        <begin position="181"/>
        <end position="184"/>
    </location>
</feature>
<feature type="strand" evidence="52">
    <location>
        <begin position="185"/>
        <end position="191"/>
    </location>
</feature>
<feature type="helix" evidence="52">
    <location>
        <begin position="207"/>
        <end position="210"/>
    </location>
</feature>
<feature type="strand" evidence="54">
    <location>
        <begin position="221"/>
        <end position="223"/>
    </location>
</feature>
<feature type="strand" evidence="52">
    <location>
        <begin position="231"/>
        <end position="233"/>
    </location>
</feature>
<feature type="turn" evidence="52">
    <location>
        <begin position="234"/>
        <end position="236"/>
    </location>
</feature>
<feature type="strand" evidence="52">
    <location>
        <begin position="237"/>
        <end position="240"/>
    </location>
</feature>
<feature type="strand" evidence="52">
    <location>
        <begin position="243"/>
        <end position="250"/>
    </location>
</feature>
<feature type="turn" evidence="52">
    <location>
        <begin position="251"/>
        <end position="253"/>
    </location>
</feature>
<feature type="strand" evidence="52">
    <location>
        <begin position="254"/>
        <end position="264"/>
    </location>
</feature>
<feature type="strand" evidence="52">
    <location>
        <begin position="267"/>
        <end position="284"/>
    </location>
</feature>
<feature type="turn" evidence="52">
    <location>
        <begin position="289"/>
        <end position="293"/>
    </location>
</feature>
<feature type="strand" evidence="54">
    <location>
        <begin position="295"/>
        <end position="297"/>
    </location>
</feature>
<feature type="helix" evidence="52">
    <location>
        <begin position="298"/>
        <end position="302"/>
    </location>
</feature>
<feature type="helix" evidence="52">
    <location>
        <begin position="304"/>
        <end position="307"/>
    </location>
</feature>
<feature type="turn" evidence="52">
    <location>
        <begin position="313"/>
        <end position="315"/>
    </location>
</feature>
<feature type="strand" evidence="52">
    <location>
        <begin position="322"/>
        <end position="324"/>
    </location>
</feature>
<feature type="strand" evidence="52">
    <location>
        <begin position="327"/>
        <end position="329"/>
    </location>
</feature>
<feature type="strand" evidence="52">
    <location>
        <begin position="335"/>
        <end position="337"/>
    </location>
</feature>
<feature type="strand" evidence="52">
    <location>
        <begin position="342"/>
        <end position="356"/>
    </location>
</feature>
<feature type="turn" evidence="52">
    <location>
        <begin position="358"/>
        <end position="360"/>
    </location>
</feature>
<feature type="strand" evidence="52">
    <location>
        <begin position="363"/>
        <end position="379"/>
    </location>
</feature>
<feature type="strand" evidence="52">
    <location>
        <begin position="382"/>
        <end position="391"/>
    </location>
</feature>
<feature type="strand" evidence="52">
    <location>
        <begin position="396"/>
        <end position="404"/>
    </location>
</feature>
<feature type="strand" evidence="52">
    <location>
        <begin position="417"/>
        <end position="423"/>
    </location>
</feature>
<feature type="strand" evidence="52">
    <location>
        <begin position="426"/>
        <end position="429"/>
    </location>
</feature>
<feature type="strand" evidence="52">
    <location>
        <begin position="431"/>
        <end position="441"/>
    </location>
</feature>
<feature type="strand" evidence="52">
    <location>
        <begin position="448"/>
        <end position="457"/>
    </location>
</feature>
<feature type="turn" evidence="49">
    <location>
        <begin position="462"/>
        <end position="464"/>
    </location>
</feature>
<feature type="strand" evidence="52">
    <location>
        <begin position="470"/>
        <end position="476"/>
    </location>
</feature>
<feature type="helix" evidence="52">
    <location>
        <begin position="480"/>
        <end position="482"/>
    </location>
</feature>
<feature type="helix" evidence="52">
    <location>
        <begin position="489"/>
        <end position="491"/>
    </location>
</feature>
<feature type="strand" evidence="52">
    <location>
        <begin position="494"/>
        <end position="503"/>
    </location>
</feature>
<feature type="strand" evidence="52">
    <location>
        <begin position="509"/>
        <end position="516"/>
    </location>
</feature>
<feature type="helix" evidence="52">
    <location>
        <begin position="529"/>
        <end position="533"/>
    </location>
</feature>
<feature type="helix" evidence="52">
    <location>
        <begin position="535"/>
        <end position="538"/>
    </location>
</feature>
<feature type="strand" evidence="52">
    <location>
        <begin position="539"/>
        <end position="545"/>
    </location>
</feature>
<feature type="strand" evidence="54">
    <location>
        <begin position="563"/>
        <end position="566"/>
    </location>
</feature>
<feature type="helix" evidence="52">
    <location>
        <begin position="567"/>
        <end position="571"/>
    </location>
</feature>
<feature type="strand" evidence="55">
    <location>
        <begin position="578"/>
        <end position="580"/>
    </location>
</feature>
<feature type="strand" evidence="52">
    <location>
        <begin position="582"/>
        <end position="592"/>
    </location>
</feature>
<feature type="helix" evidence="52">
    <location>
        <begin position="596"/>
        <end position="598"/>
    </location>
</feature>
<feature type="strand" evidence="52">
    <location>
        <begin position="599"/>
        <end position="615"/>
    </location>
</feature>
<feature type="strand" evidence="52">
    <location>
        <begin position="617"/>
        <end position="619"/>
    </location>
</feature>
<feature type="turn" evidence="52">
    <location>
        <begin position="621"/>
        <end position="624"/>
    </location>
</feature>
<accession>P46881</accession>